<protein>
    <recommendedName>
        <fullName evidence="9">Exo-beta-D-glucosaminidase</fullName>
        <shortName evidence="7">GlcNase</shortName>
        <ecNumber>3.2.1.165</ecNumber>
    </recommendedName>
    <alternativeName>
        <fullName evidence="7">Exochitinase</fullName>
    </alternativeName>
</protein>
<sequence>MSFRQKRTRIPLLAMTVTALAAAVCGVTTAPAATGAEVAVPLSVGAAAGNATPIPGYVIQSSAQVSDDSAVSKPGFPTSGWYPVSSRSTVYAGLLQNGKYADPFYSTNMQNVPAAQFSVPWWYRTDLNVDDTSSRTYLDFSGVLSKADVWVNGTKVATKDQVNGAYTRHDLDITAQVHTGVNSVAFKVYPNDPNRDLSMGWIDWAQTPPDQNMGIVRDVLVRRSGAVALRSAHVIQKLNSALDHADLTVKADVRNDSANAVQTTVAGTVAGKPISQTVSLAAKERKTVTFPLVGLDRPNVWWPAGMGGQHRYDLDLTASVGGTPSDAAKSKFGVRDVKATLNSSGGRQYSVNGKPLLIRGGGYTPDLFLRWNETAAADKLKYVLNLGLNTVRLEGHIEPDEFFDIADDLGVLTMPGWECCDKWEGQVNGEEKGEPWVESDYPIAKASMFSEAERLRDHPSVISFHIGSDFAPDRRIEQGYLDAMKAADFLLPVIPAASARPSPITGASGMKMNGPYDYVPPVYWYDKSQKDRGGAWSFNSETSAGVDIPTMDTLKRMMSASELDTMWKNPSAKQYHRSSSDTFGNLKLFGDALTKRYGASANLNDFVRKAQLSQYENVRAEFESHSRNYTDSTNPSTGLIYWMLNSPWTSLHWQLFDAYMDQNGAYYGAKKANEPLHIQYSHDNRSVVVINQTSNAVSGLTATTKLYNLDGTEKYSNTKTGLSVGALGAKATAVTVPAVSGLSTTYLAKWVLTDSSGKEVSRNVYWLSTKADTLNWGGSDWYYTPQSAFADLSGLNNLGQSAVGATANSVAGADGTTTTTVTLKNTSGGRLPAFYVDSKVVDSAGKPVLPVEWNDNAVSLWPGETTTLTAKYRTADLKGSKPSVRISGWNTGTQTVPADGSGPGPSDPVDYQAEDATIVQGAVESNHAGYTGTGFVNYDNVAGSSVEWTVTVPSAGTYDVVVRYANGTTTSRPLDFSVNGSISASGVAFGSTGTWPAWTTKTVRVTLAAGVNKIKAVATTANGGPNVDKITL</sequence>
<comment type="function">
    <text evidence="4 6">Hydrolyzes chitosan and chitooligosaccharides with retention of anomeric configuration. Has maximum activity on chitotetraose, chitopentaose and their corresponding alcohols, with a slight decrease in the rate of hydrolysis on longer chains. Has no activity against beta-D-glucopyranoside, beta-D-xylopyranoside, beta-D-mannoside, beta-D-glucuronide, beta-D-galactoside, beta-D-N-acetylgalactosamide, beta-D-N-acetylglucosaminide and alpha-D-N-acetylglucosaminide.</text>
</comment>
<comment type="catalytic activity">
    <reaction evidence="4 6">
        <text>Hydrolysis of chitosan or chitosan oligosaccharides to remove successive D-glucosamine residues from the non-reducing termini.</text>
        <dbReference type="EC" id="3.2.1.165"/>
    </reaction>
</comment>
<comment type="biophysicochemical properties">
    <phDependence>
        <text evidence="4 6">Optimum pH is 5.5 with chitotriitol as substrate, and 5.3 with (GlcN)2 as substrate. Activity is lost below pH 3.5 and above pH 8.0.</text>
    </phDependence>
    <temperatureDependence>
        <text evidence="4 6">Optimum temperature is 60 degrees Celsius. Stable below 50 degrees Celsius, inactive above 60 degrees Celsius.</text>
    </temperatureDependence>
</comment>
<comment type="subunit">
    <text evidence="4 5 6">Monomer.</text>
</comment>
<comment type="subcellular location">
    <subcellularLocation>
        <location evidence="4 6">Secreted</location>
    </subcellularLocation>
</comment>
<comment type="similarity">
    <text evidence="1">Belongs to the glycosyl hydrolase 2 family.</text>
</comment>
<evidence type="ECO:0000255" key="1"/>
<evidence type="ECO:0000255" key="2">
    <source>
        <dbReference type="PROSITE-ProRule" id="PRU00523"/>
    </source>
</evidence>
<evidence type="ECO:0000256" key="3">
    <source>
        <dbReference type="SAM" id="MobiDB-lite"/>
    </source>
</evidence>
<evidence type="ECO:0000269" key="4">
    <source>
    </source>
</evidence>
<evidence type="ECO:0000269" key="5">
    <source>
    </source>
</evidence>
<evidence type="ECO:0000269" key="6">
    <source>
    </source>
</evidence>
<evidence type="ECO:0000303" key="7">
    <source>
    </source>
</evidence>
<evidence type="ECO:0000305" key="8"/>
<evidence type="ECO:0000312" key="9">
    <source>
        <dbReference type="EMBL" id="AAX62629.2"/>
    </source>
</evidence>
<evidence type="ECO:0007829" key="10">
    <source>
        <dbReference type="PDB" id="2VZP"/>
    </source>
</evidence>
<evidence type="ECO:0007829" key="11">
    <source>
        <dbReference type="PDB" id="2VZS"/>
    </source>
</evidence>
<evidence type="ECO:0007829" key="12">
    <source>
        <dbReference type="PDB" id="2VZU"/>
    </source>
</evidence>
<evidence type="ECO:0007829" key="13">
    <source>
        <dbReference type="PDB" id="2VZV"/>
    </source>
</evidence>
<evidence type="ECO:0007829" key="14">
    <source>
        <dbReference type="PDB" id="2X09"/>
    </source>
</evidence>
<reference evidence="8 9" key="1">
    <citation type="journal article" date="2006" name="Biochem. J.">
        <title>Two exo-beta-D-glucosaminidases/exochitosanases from actinomycetes define a new subfamily within family 2 of glycoside hydrolases.</title>
        <authorList>
            <person name="Cote N."/>
            <person name="Fleury A."/>
            <person name="Dumont-Blanchette E."/>
            <person name="Fukamizo T."/>
            <person name="Mitsutomi M."/>
            <person name="Brzezinski R."/>
        </authorList>
    </citation>
    <scope>NUCLEOTIDE SEQUENCE [GENOMIC DNA]</scope>
    <scope>PROTEIN SEQUENCE OF 47-60 AND 610-619</scope>
    <scope>FUNCTION</scope>
    <scope>CATALYTIC ACTIVITY</scope>
    <scope>BIOPHYSICOCHEMICAL PROPERTIES</scope>
    <scope>SUBUNIT</scope>
    <scope>SUBCELLULAR LOCATION</scope>
    <source>
        <strain>ATCC 19795 / DSM 40040 / CBS 547.68 / JCM 4235 / KCTC 9412 / NBRC 12806 / NCIMB 12945 / M43-05865</strain>
    </source>
</reference>
<reference evidence="8" key="2">
    <citation type="journal article" date="1990" name="J. Biol. Chem.">
        <title>Purification and characterization of an exo-beta-D-glucosaminidase, a novel type of enzyme, from Nocardia orientalis.</title>
        <authorList>
            <person name="Nanjo F."/>
            <person name="Katsumi R."/>
            <person name="Sakai K."/>
        </authorList>
    </citation>
    <scope>FUNCTION</scope>
    <scope>CATALYTIC ACTIVITY</scope>
    <scope>BIOPHYSICOCHEMICAL PROPERTIES</scope>
    <scope>SUBUNIT</scope>
    <scope>SUBCELLULAR LOCATION</scope>
</reference>
<reference evidence="8" key="3">
    <citation type="journal article" date="2009" name="J. Mol. Biol.">
        <title>The structural basis of substrate recognition in an exo-beta-D-glucosaminidase involved in chitosan hydrolysis.</title>
        <authorList>
            <person name="van Bueren A.L."/>
            <person name="Ghinet M.G."/>
            <person name="Gregg K."/>
            <person name="Fleury A."/>
            <person name="Brzezinski R."/>
            <person name="Boraston A.B."/>
        </authorList>
    </citation>
    <scope>X-RAY CRYSTALLOGRAPHY (1.85 ANGSTROMS) OF 2-1032 IN COMPLEX WITH BETA-1,4-D-GLUCOSAMINE TETRASACCHARIDE</scope>
    <scope>ACTIVE SITES</scope>
</reference>
<feature type="signal peptide" evidence="1">
    <location>
        <begin position="1"/>
        <end position="32"/>
    </location>
</feature>
<feature type="propeptide" id="PRO_0000399046" evidence="1 4">
    <location>
        <begin position="33"/>
        <end position="46"/>
    </location>
</feature>
<feature type="chain" id="PRO_5000095799" description="Exo-beta-D-glucosaminidase" evidence="4">
    <location>
        <begin position="47"/>
        <end position="1032"/>
    </location>
</feature>
<feature type="domain" description="CBM6" evidence="2">
    <location>
        <begin position="909"/>
        <end position="1032"/>
    </location>
</feature>
<feature type="region of interest" description="Disordered" evidence="3">
    <location>
        <begin position="883"/>
        <end position="908"/>
    </location>
</feature>
<feature type="active site" description="Proton donor" evidence="5">
    <location>
        <position position="469"/>
    </location>
</feature>
<feature type="active site" description="Nucleophile" evidence="5">
    <location>
        <position position="541"/>
    </location>
</feature>
<feature type="sequence conflict" description="In Ref. 1; AA sequence." evidence="8" ref="1">
    <original>V</original>
    <variation>VN</variation>
    <location>
        <position position="58"/>
    </location>
</feature>
<feature type="strand" evidence="11">
    <location>
        <begin position="51"/>
        <end position="53"/>
    </location>
</feature>
<feature type="strand" evidence="11">
    <location>
        <begin position="56"/>
        <end position="61"/>
    </location>
</feature>
<feature type="helix" evidence="11">
    <location>
        <begin position="62"/>
        <end position="64"/>
    </location>
</feature>
<feature type="helix" evidence="11">
    <location>
        <begin position="68"/>
        <end position="70"/>
    </location>
</feature>
<feature type="strand" evidence="11">
    <location>
        <begin position="82"/>
        <end position="85"/>
    </location>
</feature>
<feature type="helix" evidence="11">
    <location>
        <begin position="90"/>
        <end position="96"/>
    </location>
</feature>
<feature type="helix" evidence="11">
    <location>
        <begin position="108"/>
        <end position="111"/>
    </location>
</feature>
<feature type="helix" evidence="11">
    <location>
        <begin position="115"/>
        <end position="117"/>
    </location>
</feature>
<feature type="strand" evidence="11">
    <location>
        <begin position="121"/>
        <end position="130"/>
    </location>
</feature>
<feature type="strand" evidence="11">
    <location>
        <begin position="133"/>
        <end position="140"/>
    </location>
</feature>
<feature type="strand" evidence="11">
    <location>
        <begin position="143"/>
        <end position="151"/>
    </location>
</feature>
<feature type="strand" evidence="11">
    <location>
        <begin position="154"/>
        <end position="157"/>
    </location>
</feature>
<feature type="turn" evidence="11">
    <location>
        <begin position="159"/>
        <end position="161"/>
    </location>
</feature>
<feature type="strand" evidence="11">
    <location>
        <begin position="162"/>
        <end position="164"/>
    </location>
</feature>
<feature type="strand" evidence="11">
    <location>
        <begin position="169"/>
        <end position="172"/>
    </location>
</feature>
<feature type="turn" evidence="11">
    <location>
        <begin position="174"/>
        <end position="176"/>
    </location>
</feature>
<feature type="strand" evidence="11">
    <location>
        <begin position="179"/>
        <end position="188"/>
    </location>
</feature>
<feature type="turn" evidence="11">
    <location>
        <begin position="193"/>
        <end position="195"/>
    </location>
</feature>
<feature type="strand" evidence="11">
    <location>
        <begin position="196"/>
        <end position="198"/>
    </location>
</feature>
<feature type="turn" evidence="11">
    <location>
        <begin position="202"/>
        <end position="204"/>
    </location>
</feature>
<feature type="turn" evidence="11">
    <location>
        <begin position="209"/>
        <end position="212"/>
    </location>
</feature>
<feature type="strand" evidence="11">
    <location>
        <begin position="219"/>
        <end position="238"/>
    </location>
</feature>
<feature type="strand" evidence="11">
    <location>
        <begin position="242"/>
        <end position="255"/>
    </location>
</feature>
<feature type="strand" evidence="11">
    <location>
        <begin position="257"/>
        <end position="259"/>
    </location>
</feature>
<feature type="strand" evidence="11">
    <location>
        <begin position="261"/>
        <end position="269"/>
    </location>
</feature>
<feature type="strand" evidence="11">
    <location>
        <begin position="272"/>
        <end position="280"/>
    </location>
</feature>
<feature type="strand" evidence="11">
    <location>
        <begin position="285"/>
        <end position="289"/>
    </location>
</feature>
<feature type="strand" evidence="11">
    <location>
        <begin position="293"/>
        <end position="297"/>
    </location>
</feature>
<feature type="turn" evidence="14">
    <location>
        <begin position="304"/>
        <end position="306"/>
    </location>
</feature>
<feature type="strand" evidence="11">
    <location>
        <begin position="312"/>
        <end position="320"/>
    </location>
</feature>
<feature type="strand" evidence="11">
    <location>
        <begin position="323"/>
        <end position="332"/>
    </location>
</feature>
<feature type="strand" evidence="11">
    <location>
        <begin position="337"/>
        <end position="341"/>
    </location>
</feature>
<feature type="strand" evidence="11">
    <location>
        <begin position="347"/>
        <end position="351"/>
    </location>
</feature>
<feature type="strand" evidence="11">
    <location>
        <begin position="354"/>
        <end position="356"/>
    </location>
</feature>
<feature type="strand" evidence="11">
    <location>
        <begin position="358"/>
        <end position="362"/>
    </location>
</feature>
<feature type="helix" evidence="11">
    <location>
        <begin position="373"/>
        <end position="385"/>
    </location>
</feature>
<feature type="strand" evidence="11">
    <location>
        <begin position="390"/>
        <end position="395"/>
    </location>
</feature>
<feature type="helix" evidence="11">
    <location>
        <begin position="400"/>
        <end position="409"/>
    </location>
</feature>
<feature type="strand" evidence="11">
    <location>
        <begin position="412"/>
        <end position="416"/>
    </location>
</feature>
<feature type="strand" evidence="11">
    <location>
        <begin position="419"/>
        <end position="421"/>
    </location>
</feature>
<feature type="helix" evidence="11">
    <location>
        <begin position="422"/>
        <end position="424"/>
    </location>
</feature>
<feature type="turn" evidence="11">
    <location>
        <begin position="425"/>
        <end position="427"/>
    </location>
</feature>
<feature type="strand" evidence="11">
    <location>
        <begin position="431"/>
        <end position="433"/>
    </location>
</feature>
<feature type="helix" evidence="11">
    <location>
        <begin position="440"/>
        <end position="455"/>
    </location>
</feature>
<feature type="strand" evidence="11">
    <location>
        <begin position="464"/>
        <end position="466"/>
    </location>
</feature>
<feature type="strand" evidence="11">
    <location>
        <begin position="468"/>
        <end position="470"/>
    </location>
</feature>
<feature type="helix" evidence="11">
    <location>
        <begin position="474"/>
        <end position="486"/>
    </location>
</feature>
<feature type="strand" evidence="11">
    <location>
        <begin position="493"/>
        <end position="495"/>
    </location>
</feature>
<feature type="strand" evidence="11">
    <location>
        <begin position="497"/>
        <end position="499"/>
    </location>
</feature>
<feature type="strand" evidence="11">
    <location>
        <begin position="503"/>
        <end position="505"/>
    </location>
</feature>
<feature type="helix" evidence="11">
    <location>
        <begin position="521"/>
        <end position="525"/>
    </location>
</feature>
<feature type="strand" evidence="11">
    <location>
        <begin position="534"/>
        <end position="542"/>
    </location>
</feature>
<feature type="helix" evidence="11">
    <location>
        <begin position="551"/>
        <end position="557"/>
    </location>
</feature>
<feature type="helix" evidence="11">
    <location>
        <begin position="560"/>
        <end position="568"/>
    </location>
</feature>
<feature type="turn" evidence="12">
    <location>
        <begin position="575"/>
        <end position="577"/>
    </location>
</feature>
<feature type="strand" evidence="11">
    <location>
        <begin position="579"/>
        <end position="581"/>
    </location>
</feature>
<feature type="helix" evidence="11">
    <location>
        <begin position="587"/>
        <end position="597"/>
    </location>
</feature>
<feature type="helix" evidence="11">
    <location>
        <begin position="603"/>
        <end position="628"/>
    </location>
</feature>
<feature type="strand" evidence="11">
    <location>
        <begin position="632"/>
        <end position="634"/>
    </location>
</feature>
<feature type="strand" evidence="11">
    <location>
        <begin position="636"/>
        <end position="642"/>
    </location>
</feature>
<feature type="strand" evidence="11">
    <location>
        <begin position="647"/>
        <end position="649"/>
    </location>
</feature>
<feature type="strand" evidence="11">
    <location>
        <begin position="651"/>
        <end position="653"/>
    </location>
</feature>
<feature type="helix" evidence="11">
    <location>
        <begin position="664"/>
        <end position="672"/>
    </location>
</feature>
<feature type="strand" evidence="11">
    <location>
        <begin position="675"/>
        <end position="680"/>
    </location>
</feature>
<feature type="turn" evidence="11">
    <location>
        <begin position="682"/>
        <end position="684"/>
    </location>
</feature>
<feature type="strand" evidence="11">
    <location>
        <begin position="686"/>
        <end position="691"/>
    </location>
</feature>
<feature type="strand" evidence="11">
    <location>
        <begin position="693"/>
        <end position="695"/>
    </location>
</feature>
<feature type="strand" evidence="11">
    <location>
        <begin position="697"/>
        <end position="708"/>
    </location>
</feature>
<feature type="strand" evidence="11">
    <location>
        <begin position="713"/>
        <end position="724"/>
    </location>
</feature>
<feature type="turn" evidence="13">
    <location>
        <begin position="726"/>
        <end position="728"/>
    </location>
</feature>
<feature type="strand" evidence="11">
    <location>
        <begin position="729"/>
        <end position="735"/>
    </location>
</feature>
<feature type="strand" evidence="11">
    <location>
        <begin position="744"/>
        <end position="753"/>
    </location>
</feature>
<feature type="strand" evidence="11">
    <location>
        <begin position="759"/>
        <end position="770"/>
    </location>
</feature>
<feature type="helix" evidence="11">
    <location>
        <begin position="776"/>
        <end position="778"/>
    </location>
</feature>
<feature type="strand" evidence="11">
    <location>
        <begin position="786"/>
        <end position="788"/>
    </location>
</feature>
<feature type="helix" evidence="11">
    <location>
        <begin position="793"/>
        <end position="797"/>
    </location>
</feature>
<feature type="strand" evidence="11">
    <location>
        <begin position="803"/>
        <end position="811"/>
    </location>
</feature>
<feature type="strand" evidence="11">
    <location>
        <begin position="815"/>
        <end position="825"/>
    </location>
</feature>
<feature type="strand" evidence="11">
    <location>
        <begin position="828"/>
        <end position="830"/>
    </location>
</feature>
<feature type="strand" evidence="11">
    <location>
        <begin position="833"/>
        <end position="841"/>
    </location>
</feature>
<feature type="strand" evidence="11">
    <location>
        <begin position="852"/>
        <end position="855"/>
    </location>
</feature>
<feature type="strand" evidence="11">
    <location>
        <begin position="857"/>
        <end position="860"/>
    </location>
</feature>
<feature type="strand" evidence="11">
    <location>
        <begin position="865"/>
        <end position="873"/>
    </location>
</feature>
<feature type="helix" evidence="11">
    <location>
        <begin position="874"/>
        <end position="877"/>
    </location>
</feature>
<feature type="strand" evidence="11">
    <location>
        <begin position="883"/>
        <end position="888"/>
    </location>
</feature>
<feature type="turn" evidence="11">
    <location>
        <begin position="889"/>
        <end position="891"/>
    </location>
</feature>
<feature type="strand" evidence="11">
    <location>
        <begin position="892"/>
        <end position="897"/>
    </location>
</feature>
<feature type="strand" evidence="10">
    <location>
        <begin position="909"/>
        <end position="912"/>
    </location>
</feature>
<feature type="helix" evidence="10">
    <location>
        <begin position="913"/>
        <end position="915"/>
    </location>
</feature>
<feature type="strand" evidence="10">
    <location>
        <begin position="916"/>
        <end position="924"/>
    </location>
</feature>
<feature type="strand" evidence="10">
    <location>
        <begin position="935"/>
        <end position="938"/>
    </location>
</feature>
<feature type="strand" evidence="10">
    <location>
        <begin position="945"/>
        <end position="965"/>
    </location>
</feature>
<feature type="strand" evidence="10">
    <location>
        <begin position="968"/>
        <end position="970"/>
    </location>
</feature>
<feature type="strand" evidence="10">
    <location>
        <begin position="974"/>
        <end position="978"/>
    </location>
</feature>
<feature type="strand" evidence="10">
    <location>
        <begin position="981"/>
        <end position="987"/>
    </location>
</feature>
<feature type="strand" evidence="10">
    <location>
        <begin position="999"/>
        <end position="1007"/>
    </location>
</feature>
<feature type="strand" evidence="10">
    <location>
        <begin position="1009"/>
        <end position="1018"/>
    </location>
</feature>
<feature type="strand" evidence="10">
    <location>
        <begin position="1026"/>
        <end position="1032"/>
    </location>
</feature>
<gene>
    <name evidence="9" type="primary">csxA</name>
</gene>
<proteinExistence type="evidence at protein level"/>
<dbReference type="EC" id="3.2.1.165"/>
<dbReference type="EMBL" id="AY962188">
    <property type="protein sequence ID" value="AAX62629.2"/>
    <property type="molecule type" value="Genomic_DNA"/>
</dbReference>
<dbReference type="PDB" id="2VZO">
    <property type="method" value="X-ray"/>
    <property type="resolution" value="2.24 A"/>
    <property type="chains" value="A/B=2-1032"/>
</dbReference>
<dbReference type="PDB" id="2VZP">
    <property type="method" value="X-ray"/>
    <property type="resolution" value="1.05 A"/>
    <property type="chains" value="A/B=906-1032"/>
</dbReference>
<dbReference type="PDB" id="2VZQ">
    <property type="method" value="X-ray"/>
    <property type="resolution" value="1.70 A"/>
    <property type="chains" value="A/B=906-1032"/>
</dbReference>
<dbReference type="PDB" id="2VZR">
    <property type="method" value="X-ray"/>
    <property type="resolution" value="1.95 A"/>
    <property type="chains" value="A/B=906-1032"/>
</dbReference>
<dbReference type="PDB" id="2VZS">
    <property type="method" value="X-ray"/>
    <property type="resolution" value="1.85 A"/>
    <property type="chains" value="A/B=2-1032"/>
</dbReference>
<dbReference type="PDB" id="2VZT">
    <property type="method" value="X-ray"/>
    <property type="resolution" value="2.20 A"/>
    <property type="chains" value="A/B=2-1032"/>
</dbReference>
<dbReference type="PDB" id="2VZU">
    <property type="method" value="X-ray"/>
    <property type="resolution" value="2.10 A"/>
    <property type="chains" value="A/B=2-1032"/>
</dbReference>
<dbReference type="PDB" id="2VZV">
    <property type="method" value="X-ray"/>
    <property type="resolution" value="2.70 A"/>
    <property type="chains" value="A/B=2-1032"/>
</dbReference>
<dbReference type="PDB" id="2X05">
    <property type="method" value="X-ray"/>
    <property type="resolution" value="2.30 A"/>
    <property type="chains" value="A/B=2-1032"/>
</dbReference>
<dbReference type="PDB" id="2X09">
    <property type="method" value="X-ray"/>
    <property type="resolution" value="2.40 A"/>
    <property type="chains" value="A/B=2-1032"/>
</dbReference>
<dbReference type="PDBsum" id="2VZO"/>
<dbReference type="PDBsum" id="2VZP"/>
<dbReference type="PDBsum" id="2VZQ"/>
<dbReference type="PDBsum" id="2VZR"/>
<dbReference type="PDBsum" id="2VZS"/>
<dbReference type="PDBsum" id="2VZT"/>
<dbReference type="PDBsum" id="2VZU"/>
<dbReference type="PDBsum" id="2VZV"/>
<dbReference type="PDBsum" id="2X05"/>
<dbReference type="PDBsum" id="2X09"/>
<dbReference type="SMR" id="Q56F26"/>
<dbReference type="STRING" id="31958.SD37_25235"/>
<dbReference type="CAZy" id="CBM35">
    <property type="family name" value="Carbohydrate-Binding Module Family 35"/>
</dbReference>
<dbReference type="CAZy" id="GH2">
    <property type="family name" value="Glycoside Hydrolase Family 2"/>
</dbReference>
<dbReference type="KEGG" id="ag:AAX62629"/>
<dbReference type="eggNOG" id="COG3250">
    <property type="taxonomic scope" value="Bacteria"/>
</dbReference>
<dbReference type="BRENDA" id="3.2.1.165">
    <property type="organism ID" value="315"/>
</dbReference>
<dbReference type="EvolutionaryTrace" id="Q56F26"/>
<dbReference type="GO" id="GO:0005576">
    <property type="term" value="C:extracellular region"/>
    <property type="evidence" value="ECO:0000314"/>
    <property type="project" value="UniProtKB"/>
</dbReference>
<dbReference type="GO" id="GO:0030246">
    <property type="term" value="F:carbohydrate binding"/>
    <property type="evidence" value="ECO:0007669"/>
    <property type="project" value="InterPro"/>
</dbReference>
<dbReference type="GO" id="GO:0052761">
    <property type="term" value="F:exo-1,4-beta-D-glucosaminidase activity"/>
    <property type="evidence" value="ECO:0007669"/>
    <property type="project" value="UniProtKB-EC"/>
</dbReference>
<dbReference type="GO" id="GO:0004553">
    <property type="term" value="F:hydrolase activity, hydrolyzing O-glycosyl compounds"/>
    <property type="evidence" value="ECO:0000314"/>
    <property type="project" value="UniProtKB"/>
</dbReference>
<dbReference type="GO" id="GO:0006032">
    <property type="term" value="P:chitin catabolic process"/>
    <property type="evidence" value="ECO:0007669"/>
    <property type="project" value="UniProtKB-KW"/>
</dbReference>
<dbReference type="GO" id="GO:0000272">
    <property type="term" value="P:polysaccharide catabolic process"/>
    <property type="evidence" value="ECO:0000314"/>
    <property type="project" value="UniProtKB"/>
</dbReference>
<dbReference type="CDD" id="cd04082">
    <property type="entry name" value="CBM35_pectate_lyase-like"/>
    <property type="match status" value="1"/>
</dbReference>
<dbReference type="FunFam" id="2.60.120.260:FF:000182">
    <property type="entry name" value="Exo-beta-D-glucosaminidase"/>
    <property type="match status" value="1"/>
</dbReference>
<dbReference type="FunFam" id="2.60.40.10:FF:001725">
    <property type="entry name" value="Exo-beta-D-glucosaminidase"/>
    <property type="match status" value="1"/>
</dbReference>
<dbReference type="FunFam" id="2.60.40.10:FF:002523">
    <property type="entry name" value="Exo-beta-D-glucosaminidase"/>
    <property type="match status" value="1"/>
</dbReference>
<dbReference type="FunFam" id="3.20.20.80:FF:000166">
    <property type="entry name" value="Exo-beta-D-glucosaminidase"/>
    <property type="match status" value="1"/>
</dbReference>
<dbReference type="Gene3D" id="2.60.120.260">
    <property type="entry name" value="Galactose-binding domain-like"/>
    <property type="match status" value="2"/>
</dbReference>
<dbReference type="Gene3D" id="3.20.20.80">
    <property type="entry name" value="Glycosidases"/>
    <property type="match status" value="1"/>
</dbReference>
<dbReference type="Gene3D" id="2.60.40.10">
    <property type="entry name" value="Immunoglobulins"/>
    <property type="match status" value="3"/>
</dbReference>
<dbReference type="InterPro" id="IPR036156">
    <property type="entry name" value="Beta-gal/glucu_dom_sf"/>
</dbReference>
<dbReference type="InterPro" id="IPR054593">
    <property type="entry name" value="Beta-mannosidase-like_N2"/>
</dbReference>
<dbReference type="InterPro" id="IPR005084">
    <property type="entry name" value="CBM6"/>
</dbReference>
<dbReference type="InterPro" id="IPR043534">
    <property type="entry name" value="EBDG/EBM"/>
</dbReference>
<dbReference type="InterPro" id="IPR008979">
    <property type="entry name" value="Galactose-bd-like_sf"/>
</dbReference>
<dbReference type="InterPro" id="IPR006102">
    <property type="entry name" value="Glyco_hydro_2_Ig-like"/>
</dbReference>
<dbReference type="InterPro" id="IPR017853">
    <property type="entry name" value="Glycoside_hydrolase_SF"/>
</dbReference>
<dbReference type="InterPro" id="IPR013783">
    <property type="entry name" value="Ig-like_fold"/>
</dbReference>
<dbReference type="InterPro" id="IPR041351">
    <property type="entry name" value="Ig_GlcNase"/>
</dbReference>
<dbReference type="PANTHER" id="PTHR43536">
    <property type="entry name" value="MANNOSYLGLYCOPROTEIN ENDO-BETA-MANNOSIDASE"/>
    <property type="match status" value="1"/>
</dbReference>
<dbReference type="PANTHER" id="PTHR43536:SF1">
    <property type="entry name" value="MANNOSYLGLYCOPROTEIN ENDO-BETA-MANNOSIDASE"/>
    <property type="match status" value="1"/>
</dbReference>
<dbReference type="Pfam" id="PF16990">
    <property type="entry name" value="CBM_35"/>
    <property type="match status" value="1"/>
</dbReference>
<dbReference type="Pfam" id="PF00703">
    <property type="entry name" value="Glyco_hydro_2"/>
    <property type="match status" value="1"/>
</dbReference>
<dbReference type="Pfam" id="PF22666">
    <property type="entry name" value="Glyco_hydro_2_N2"/>
    <property type="match status" value="1"/>
</dbReference>
<dbReference type="Pfam" id="PF18368">
    <property type="entry name" value="Ig_GlcNase"/>
    <property type="match status" value="1"/>
</dbReference>
<dbReference type="SUPFAM" id="SSF51445">
    <property type="entry name" value="(Trans)glycosidases"/>
    <property type="match status" value="1"/>
</dbReference>
<dbReference type="SUPFAM" id="SSF49303">
    <property type="entry name" value="beta-Galactosidase/glucuronidase domain"/>
    <property type="match status" value="3"/>
</dbReference>
<dbReference type="SUPFAM" id="SSF49785">
    <property type="entry name" value="Galactose-binding domain-like"/>
    <property type="match status" value="2"/>
</dbReference>
<dbReference type="PROSITE" id="PS51175">
    <property type="entry name" value="CBM6"/>
    <property type="match status" value="1"/>
</dbReference>
<organism>
    <name type="scientific">Amycolatopsis orientalis</name>
    <name type="common">Nocardia orientalis</name>
    <dbReference type="NCBI Taxonomy" id="31958"/>
    <lineage>
        <taxon>Bacteria</taxon>
        <taxon>Bacillati</taxon>
        <taxon>Actinomycetota</taxon>
        <taxon>Actinomycetes</taxon>
        <taxon>Pseudonocardiales</taxon>
        <taxon>Pseudonocardiaceae</taxon>
        <taxon>Amycolatopsis</taxon>
    </lineage>
</organism>
<name>EBDG_AMYOR</name>
<accession>Q56F26</accession>
<keyword id="KW-0002">3D-structure</keyword>
<keyword id="KW-0119">Carbohydrate metabolism</keyword>
<keyword id="KW-0146">Chitin degradation</keyword>
<keyword id="KW-0903">Direct protein sequencing</keyword>
<keyword id="KW-0326">Glycosidase</keyword>
<keyword id="KW-0378">Hydrolase</keyword>
<keyword id="KW-0624">Polysaccharide degradation</keyword>
<keyword id="KW-0964">Secreted</keyword>
<keyword id="KW-0732">Signal</keyword>